<feature type="chain" id="PRO_0000245536" description="ATP-dependent RNA helicase DHX29">
    <location>
        <begin position="1"/>
        <end position="1365"/>
    </location>
</feature>
<feature type="domain" description="Helicase ATP-binding" evidence="2">
    <location>
        <begin position="581"/>
        <end position="754"/>
    </location>
</feature>
<feature type="domain" description="Helicase C-terminal" evidence="2">
    <location>
        <begin position="848"/>
        <end position="1025"/>
    </location>
</feature>
<feature type="region of interest" description="Disordered" evidence="3">
    <location>
        <begin position="1"/>
        <end position="74"/>
    </location>
</feature>
<feature type="region of interest" description="Disordered" evidence="3">
    <location>
        <begin position="174"/>
        <end position="222"/>
    </location>
</feature>
<feature type="region of interest" description="Disordered" evidence="3">
    <location>
        <begin position="235"/>
        <end position="257"/>
    </location>
</feature>
<feature type="region of interest" description="Disordered" evidence="3">
    <location>
        <begin position="500"/>
        <end position="524"/>
    </location>
</feature>
<feature type="coiled-coil region" evidence="2">
    <location>
        <begin position="281"/>
        <end position="308"/>
    </location>
</feature>
<feature type="short sequence motif" description="DEAH box" evidence="2">
    <location>
        <begin position="701"/>
        <end position="704"/>
    </location>
</feature>
<feature type="compositionally biased region" description="Basic residues" evidence="3">
    <location>
        <begin position="1"/>
        <end position="10"/>
    </location>
</feature>
<feature type="compositionally biased region" description="Low complexity" evidence="3">
    <location>
        <begin position="11"/>
        <end position="36"/>
    </location>
</feature>
<feature type="compositionally biased region" description="Low complexity" evidence="3">
    <location>
        <begin position="43"/>
        <end position="53"/>
    </location>
</feature>
<feature type="compositionally biased region" description="Polar residues" evidence="3">
    <location>
        <begin position="187"/>
        <end position="203"/>
    </location>
</feature>
<feature type="compositionally biased region" description="Basic and acidic residues" evidence="3">
    <location>
        <begin position="206"/>
        <end position="222"/>
    </location>
</feature>
<feature type="binding site" evidence="2">
    <location>
        <begin position="594"/>
        <end position="601"/>
    </location>
    <ligand>
        <name>ATP</name>
        <dbReference type="ChEBI" id="CHEBI:30616"/>
    </ligand>
</feature>
<feature type="modified residue" description="Phosphoserine" evidence="1">
    <location>
        <position position="69"/>
    </location>
</feature>
<feature type="modified residue" description="Phosphoserine" evidence="1">
    <location>
        <position position="190"/>
    </location>
</feature>
<feature type="modified residue" description="Phosphoserine" evidence="4">
    <location>
        <position position="198"/>
    </location>
</feature>
<dbReference type="EC" id="3.6.4.13" evidence="2"/>
<dbReference type="EMBL" id="BC057112">
    <property type="protein sequence ID" value="AAH57112.1"/>
    <property type="molecule type" value="mRNA"/>
</dbReference>
<dbReference type="EMBL" id="BC082319">
    <property type="protein sequence ID" value="AAH82319.1"/>
    <property type="molecule type" value="mRNA"/>
</dbReference>
<dbReference type="EMBL" id="AK028342">
    <property type="protein sequence ID" value="BAC25894.1"/>
    <property type="molecule type" value="mRNA"/>
</dbReference>
<dbReference type="EMBL" id="AK042066">
    <property type="protein sequence ID" value="BAC31148.2"/>
    <property type="molecule type" value="mRNA"/>
</dbReference>
<dbReference type="EMBL" id="AK042497">
    <property type="protein sequence ID" value="BAC31274.2"/>
    <property type="molecule type" value="mRNA"/>
</dbReference>
<dbReference type="EMBL" id="AK049530">
    <property type="protein sequence ID" value="BAC33796.1"/>
    <property type="molecule type" value="mRNA"/>
</dbReference>
<dbReference type="CCDS" id="CCDS26779.1"/>
<dbReference type="RefSeq" id="NP_766182.2">
    <property type="nucleotide sequence ID" value="NM_172594.2"/>
</dbReference>
<dbReference type="SMR" id="Q6PGC1"/>
<dbReference type="BioGRID" id="230051">
    <property type="interactions" value="46"/>
</dbReference>
<dbReference type="FunCoup" id="Q6PGC1">
    <property type="interactions" value="3395"/>
</dbReference>
<dbReference type="IntAct" id="Q6PGC1">
    <property type="interactions" value="1"/>
</dbReference>
<dbReference type="MINT" id="Q6PGC1"/>
<dbReference type="STRING" id="10090.ENSMUSP00000035244"/>
<dbReference type="GlyGen" id="Q6PGC1">
    <property type="glycosylation" value="2 sites, 1 N-linked glycan (1 site), 1 O-linked glycan (1 site)"/>
</dbReference>
<dbReference type="iPTMnet" id="Q6PGC1"/>
<dbReference type="PhosphoSitePlus" id="Q6PGC1"/>
<dbReference type="jPOST" id="Q6PGC1"/>
<dbReference type="PaxDb" id="10090-ENSMUSP00000035244"/>
<dbReference type="PeptideAtlas" id="Q6PGC1"/>
<dbReference type="ProteomicsDB" id="279530"/>
<dbReference type="Pumba" id="Q6PGC1"/>
<dbReference type="Antibodypedia" id="11081">
    <property type="antibodies" value="95 antibodies from 23 providers"/>
</dbReference>
<dbReference type="DNASU" id="218629"/>
<dbReference type="Ensembl" id="ENSMUST00000038574.7">
    <property type="protein sequence ID" value="ENSMUSP00000035244.6"/>
    <property type="gene ID" value="ENSMUSG00000042426.7"/>
</dbReference>
<dbReference type="GeneID" id="218629"/>
<dbReference type="KEGG" id="mmu:218629"/>
<dbReference type="UCSC" id="uc007rwx.1">
    <property type="organism name" value="mouse"/>
</dbReference>
<dbReference type="AGR" id="MGI:2145374"/>
<dbReference type="CTD" id="54505"/>
<dbReference type="MGI" id="MGI:2145374">
    <property type="gene designation" value="Dhx29"/>
</dbReference>
<dbReference type="VEuPathDB" id="HostDB:ENSMUSG00000042426"/>
<dbReference type="eggNOG" id="KOG0920">
    <property type="taxonomic scope" value="Eukaryota"/>
</dbReference>
<dbReference type="GeneTree" id="ENSGT00940000157286"/>
<dbReference type="HOGENOM" id="CLU_001832_1_4_1"/>
<dbReference type="InParanoid" id="Q6PGC1"/>
<dbReference type="OMA" id="SWFANMS"/>
<dbReference type="OrthoDB" id="5600252at2759"/>
<dbReference type="PhylomeDB" id="Q6PGC1"/>
<dbReference type="TreeFam" id="TF324744"/>
<dbReference type="BioGRID-ORCS" id="218629">
    <property type="hits" value="17 hits in 80 CRISPR screens"/>
</dbReference>
<dbReference type="CD-CODE" id="CE726F99">
    <property type="entry name" value="Postsynaptic density"/>
</dbReference>
<dbReference type="ChiTaRS" id="Dhx29">
    <property type="organism name" value="mouse"/>
</dbReference>
<dbReference type="PRO" id="PR:Q6PGC1"/>
<dbReference type="Proteomes" id="UP000000589">
    <property type="component" value="Chromosome 13"/>
</dbReference>
<dbReference type="RNAct" id="Q6PGC1">
    <property type="molecule type" value="protein"/>
</dbReference>
<dbReference type="Bgee" id="ENSMUSG00000042426">
    <property type="expression patterns" value="Expressed in superior cervical ganglion and 238 other cell types or tissues"/>
</dbReference>
<dbReference type="ExpressionAtlas" id="Q6PGC1">
    <property type="expression patterns" value="baseline and differential"/>
</dbReference>
<dbReference type="GO" id="GO:0022627">
    <property type="term" value="C:cytosolic small ribosomal subunit"/>
    <property type="evidence" value="ECO:0007669"/>
    <property type="project" value="Ensembl"/>
</dbReference>
<dbReference type="GO" id="GO:0016282">
    <property type="term" value="C:eukaryotic 43S preinitiation complex"/>
    <property type="evidence" value="ECO:0000250"/>
    <property type="project" value="UniProtKB"/>
</dbReference>
<dbReference type="GO" id="GO:0005739">
    <property type="term" value="C:mitochondrion"/>
    <property type="evidence" value="ECO:0007005"/>
    <property type="project" value="MGI"/>
</dbReference>
<dbReference type="GO" id="GO:0005524">
    <property type="term" value="F:ATP binding"/>
    <property type="evidence" value="ECO:0007669"/>
    <property type="project" value="UniProtKB-UniRule"/>
</dbReference>
<dbReference type="GO" id="GO:0016887">
    <property type="term" value="F:ATP hydrolysis activity"/>
    <property type="evidence" value="ECO:0007669"/>
    <property type="project" value="RHEA"/>
</dbReference>
<dbReference type="GO" id="GO:0003676">
    <property type="term" value="F:nucleic acid binding"/>
    <property type="evidence" value="ECO:0007669"/>
    <property type="project" value="InterPro"/>
</dbReference>
<dbReference type="GO" id="GO:0043024">
    <property type="term" value="F:ribosomal small subunit binding"/>
    <property type="evidence" value="ECO:0000250"/>
    <property type="project" value="UniProtKB"/>
</dbReference>
<dbReference type="GO" id="GO:0003724">
    <property type="term" value="F:RNA helicase activity"/>
    <property type="evidence" value="ECO:0007669"/>
    <property type="project" value="UniProtKB-UniRule"/>
</dbReference>
<dbReference type="GO" id="GO:0008494">
    <property type="term" value="F:translation activator activity"/>
    <property type="evidence" value="ECO:0007669"/>
    <property type="project" value="Ensembl"/>
</dbReference>
<dbReference type="GO" id="GO:0003743">
    <property type="term" value="F:translation initiation factor activity"/>
    <property type="evidence" value="ECO:0007669"/>
    <property type="project" value="UniProtKB-KW"/>
</dbReference>
<dbReference type="GO" id="GO:0001731">
    <property type="term" value="P:formation of translation preinitiation complex"/>
    <property type="evidence" value="ECO:0007669"/>
    <property type="project" value="Ensembl"/>
</dbReference>
<dbReference type="GO" id="GO:0045948">
    <property type="term" value="P:positive regulation of translational initiation"/>
    <property type="evidence" value="ECO:0007669"/>
    <property type="project" value="UniProtKB-UniRule"/>
</dbReference>
<dbReference type="GO" id="GO:0042255">
    <property type="term" value="P:ribosome assembly"/>
    <property type="evidence" value="ECO:0007669"/>
    <property type="project" value="Ensembl"/>
</dbReference>
<dbReference type="CDD" id="cd18791">
    <property type="entry name" value="SF2_C_RHA"/>
    <property type="match status" value="1"/>
</dbReference>
<dbReference type="FunFam" id="3.40.50.300:FF:000325">
    <property type="entry name" value="ATP-dependent RNA helicase DHX29"/>
    <property type="match status" value="1"/>
</dbReference>
<dbReference type="FunFam" id="3.40.50.300:FF:000500">
    <property type="entry name" value="ATP-dependent RNA helicase DHX29"/>
    <property type="match status" value="1"/>
</dbReference>
<dbReference type="FunFam" id="1.20.120.1080:FF:000002">
    <property type="entry name" value="Putative ATP-dependent RNA helicase DHX36"/>
    <property type="match status" value="1"/>
</dbReference>
<dbReference type="Gene3D" id="1.20.120.1080">
    <property type="match status" value="1"/>
</dbReference>
<dbReference type="Gene3D" id="3.40.50.300">
    <property type="entry name" value="P-loop containing nucleotide triphosphate hydrolases"/>
    <property type="match status" value="2"/>
</dbReference>
<dbReference type="HAMAP" id="MF_03068">
    <property type="entry name" value="DHX29"/>
    <property type="match status" value="1"/>
</dbReference>
<dbReference type="InterPro" id="IPR011709">
    <property type="entry name" value="DEAD-box_helicase_OB_fold"/>
</dbReference>
<dbReference type="InterPro" id="IPR011545">
    <property type="entry name" value="DEAD/DEAH_box_helicase_dom"/>
</dbReference>
<dbReference type="InterPro" id="IPR034730">
    <property type="entry name" value="DHX29"/>
</dbReference>
<dbReference type="InterPro" id="IPR002464">
    <property type="entry name" value="DNA/RNA_helicase_DEAH_CS"/>
</dbReference>
<dbReference type="InterPro" id="IPR056328">
    <property type="entry name" value="DSRM_DHX29"/>
</dbReference>
<dbReference type="InterPro" id="IPR048333">
    <property type="entry name" value="HA2_WH"/>
</dbReference>
<dbReference type="InterPro" id="IPR007502">
    <property type="entry name" value="Helicase-assoc_dom"/>
</dbReference>
<dbReference type="InterPro" id="IPR014001">
    <property type="entry name" value="Helicase_ATP-bd"/>
</dbReference>
<dbReference type="InterPro" id="IPR001650">
    <property type="entry name" value="Helicase_C-like"/>
</dbReference>
<dbReference type="InterPro" id="IPR027417">
    <property type="entry name" value="P-loop_NTPase"/>
</dbReference>
<dbReference type="InterPro" id="IPR056890">
    <property type="entry name" value="UBA_DHX29-like"/>
</dbReference>
<dbReference type="PANTHER" id="PTHR18934">
    <property type="entry name" value="ATP-DEPENDENT RNA HELICASE"/>
    <property type="match status" value="1"/>
</dbReference>
<dbReference type="PANTHER" id="PTHR18934:SF264">
    <property type="entry name" value="ATP-DEPENDENT RNA HELICASE DHX29"/>
    <property type="match status" value="1"/>
</dbReference>
<dbReference type="Pfam" id="PF00270">
    <property type="entry name" value="DEAD"/>
    <property type="match status" value="1"/>
</dbReference>
<dbReference type="Pfam" id="PF24385">
    <property type="entry name" value="DSRM_DHX29"/>
    <property type="match status" value="1"/>
</dbReference>
<dbReference type="Pfam" id="PF21010">
    <property type="entry name" value="HA2_C"/>
    <property type="match status" value="1"/>
</dbReference>
<dbReference type="Pfam" id="PF04408">
    <property type="entry name" value="HA2_N"/>
    <property type="match status" value="1"/>
</dbReference>
<dbReference type="Pfam" id="PF00271">
    <property type="entry name" value="Helicase_C"/>
    <property type="match status" value="1"/>
</dbReference>
<dbReference type="Pfam" id="PF07717">
    <property type="entry name" value="OB_NTP_bind"/>
    <property type="match status" value="1"/>
</dbReference>
<dbReference type="Pfam" id="PF24899">
    <property type="entry name" value="UBA_DHX29"/>
    <property type="match status" value="1"/>
</dbReference>
<dbReference type="SMART" id="SM00487">
    <property type="entry name" value="DEXDc"/>
    <property type="match status" value="1"/>
</dbReference>
<dbReference type="SMART" id="SM00847">
    <property type="entry name" value="HA2"/>
    <property type="match status" value="1"/>
</dbReference>
<dbReference type="SMART" id="SM00490">
    <property type="entry name" value="HELICc"/>
    <property type="match status" value="1"/>
</dbReference>
<dbReference type="SUPFAM" id="SSF52540">
    <property type="entry name" value="P-loop containing nucleoside triphosphate hydrolases"/>
    <property type="match status" value="1"/>
</dbReference>
<dbReference type="PROSITE" id="PS00690">
    <property type="entry name" value="DEAH_ATP_HELICASE"/>
    <property type="match status" value="1"/>
</dbReference>
<dbReference type="PROSITE" id="PS51192">
    <property type="entry name" value="HELICASE_ATP_BIND_1"/>
    <property type="match status" value="1"/>
</dbReference>
<dbReference type="PROSITE" id="PS51194">
    <property type="entry name" value="HELICASE_CTER"/>
    <property type="match status" value="1"/>
</dbReference>
<sequence length="1365" mass="153975">MGGKNKKHKAPGAAAMRAAVSASRARSAEAGAVGEAQSKKPVARPAPAVPTGAREPRVKQGPKIYSFNSANDSGGSANLDKSILKVVINNKLEQRIIGVINEHKKQNSDRGAISGRLSAKKLQDLYMALQAFSFKTKDIEDAMTNTLLHGGDLHSALDWLCLNLSDDALPEGFSQEFEEQQPKSRPKFQSVQIQATLSPPQQTKTKRQEEDPKIKPKKEETTVEVNMKEWILRYAEQQDEEEKGEGSKGLEEEEKFDPNQRYLNLAARLLDAKEQAAAFKLEKNKQGQKEAQEKIRKFQREMETLEDHPIFNPAIKISHQQNEKKKPAPATEAESALNLNLFEKSAAATEEEKGKKKEPHDVRNFDYTARSWTGKSPKQFLIDWVRKNLPKSPNPSFEKVAVGRYWKCRVRVVRSEDDVLVVCPTILTEDGMQAQHLGATLALYRLVKGQSVHQLLPPTYRDVWLEWSDEEKKREELNKMETNKPRDLFIAKLLNKLKQQQQQQQQQRPESEKGGSEDPEESWENLVSDEDLAALSLEPTSAEDLAPVRSLFRRLQSTPKYQRLLKERQQLPVFKHRDSIVETLKRHRVVVVAGETGSGKSTQVPHFLLEDLLLDECGARKCNIVCTQPRRISAVSLATRVCEELGCESGPGGRNSLCGYQIRMESRASESTRLLYCTTGVLLRKLQEDGLLADVSHVIVDEVHERSVQSDFLLVILKEILQKRSDLHLILMSATVDSDKFSTYFTHCPILRISGRSYPVEVFHLEDIVEETGFVLEKDSEYCQKFLEEEEEITINVTSKAGGVKKYQEYIPVQSGASPELNPFYQKYSSRTQHAILYMNPHKINLDLILELLVYLDKSPQFRNIEGAVLIFLPGLAHIQQLYDLLSSDRRFYSERYQVIALHSVLSTQDQAAAFMFPPPGVRKIVLATNIAETGITIPDVVFVIDTGRTKENKYHESSQMSSLVETFVSKASALQRQGRAGRVRDGFCFRLYTRERFEGFLDYSVPEILRVPLEELCLHIMKCDLGSPEDFLSKALDPPQLQVISNAMNLLRKIGACEPNEPKLTPLGQHLAALPVNVKIGKMLIFGAIFGCLEPVATLAAVMTEKSPFITPIGRKDEADLAKSSLAVADSDHLTIYNAYLGWKKAQQEGGFRSEISYCQRNFLNRTSLLTLEDVKQELMKLVKAAGFSSSPSWEGRKGPQTLSFQDIALLKAVLAAGLYDSVGKIMCTKSVDVTEKLACMVETAQGKAQVHPSSVNRDLQTYGWLLYQEKVRYTRVYLRETTLITPFPVLLFGGDIEVQHRERLLSVDGWIYFQAPVKIAVIFKQLRVLIDSVLRKKLENPKMSLENDKILQIITELIKTENN</sequence>
<reference key="1">
    <citation type="journal article" date="2004" name="Genome Res.">
        <title>The status, quality, and expansion of the NIH full-length cDNA project: the Mammalian Gene Collection (MGC).</title>
        <authorList>
            <consortium name="The MGC Project Team"/>
        </authorList>
    </citation>
    <scope>NUCLEOTIDE SEQUENCE [LARGE SCALE MRNA]</scope>
    <source>
        <strain>C57BL/6J</strain>
        <tissue>Brain</tissue>
    </source>
</reference>
<reference key="2">
    <citation type="journal article" date="2005" name="Science">
        <title>The transcriptional landscape of the mammalian genome.</title>
        <authorList>
            <person name="Carninci P."/>
            <person name="Kasukawa T."/>
            <person name="Katayama S."/>
            <person name="Gough J."/>
            <person name="Frith M.C."/>
            <person name="Maeda N."/>
            <person name="Oyama R."/>
            <person name="Ravasi T."/>
            <person name="Lenhard B."/>
            <person name="Wells C."/>
            <person name="Kodzius R."/>
            <person name="Shimokawa K."/>
            <person name="Bajic V.B."/>
            <person name="Brenner S.E."/>
            <person name="Batalov S."/>
            <person name="Forrest A.R."/>
            <person name="Zavolan M."/>
            <person name="Davis M.J."/>
            <person name="Wilming L.G."/>
            <person name="Aidinis V."/>
            <person name="Allen J.E."/>
            <person name="Ambesi-Impiombato A."/>
            <person name="Apweiler R."/>
            <person name="Aturaliya R.N."/>
            <person name="Bailey T.L."/>
            <person name="Bansal M."/>
            <person name="Baxter L."/>
            <person name="Beisel K.W."/>
            <person name="Bersano T."/>
            <person name="Bono H."/>
            <person name="Chalk A.M."/>
            <person name="Chiu K.P."/>
            <person name="Choudhary V."/>
            <person name="Christoffels A."/>
            <person name="Clutterbuck D.R."/>
            <person name="Crowe M.L."/>
            <person name="Dalla E."/>
            <person name="Dalrymple B.P."/>
            <person name="de Bono B."/>
            <person name="Della Gatta G."/>
            <person name="di Bernardo D."/>
            <person name="Down T."/>
            <person name="Engstrom P."/>
            <person name="Fagiolini M."/>
            <person name="Faulkner G."/>
            <person name="Fletcher C.F."/>
            <person name="Fukushima T."/>
            <person name="Furuno M."/>
            <person name="Futaki S."/>
            <person name="Gariboldi M."/>
            <person name="Georgii-Hemming P."/>
            <person name="Gingeras T.R."/>
            <person name="Gojobori T."/>
            <person name="Green R.E."/>
            <person name="Gustincich S."/>
            <person name="Harbers M."/>
            <person name="Hayashi Y."/>
            <person name="Hensch T.K."/>
            <person name="Hirokawa N."/>
            <person name="Hill D."/>
            <person name="Huminiecki L."/>
            <person name="Iacono M."/>
            <person name="Ikeo K."/>
            <person name="Iwama A."/>
            <person name="Ishikawa T."/>
            <person name="Jakt M."/>
            <person name="Kanapin A."/>
            <person name="Katoh M."/>
            <person name="Kawasawa Y."/>
            <person name="Kelso J."/>
            <person name="Kitamura H."/>
            <person name="Kitano H."/>
            <person name="Kollias G."/>
            <person name="Krishnan S.P."/>
            <person name="Kruger A."/>
            <person name="Kummerfeld S.K."/>
            <person name="Kurochkin I.V."/>
            <person name="Lareau L.F."/>
            <person name="Lazarevic D."/>
            <person name="Lipovich L."/>
            <person name="Liu J."/>
            <person name="Liuni S."/>
            <person name="McWilliam S."/>
            <person name="Madan Babu M."/>
            <person name="Madera M."/>
            <person name="Marchionni L."/>
            <person name="Matsuda H."/>
            <person name="Matsuzawa S."/>
            <person name="Miki H."/>
            <person name="Mignone F."/>
            <person name="Miyake S."/>
            <person name="Morris K."/>
            <person name="Mottagui-Tabar S."/>
            <person name="Mulder N."/>
            <person name="Nakano N."/>
            <person name="Nakauchi H."/>
            <person name="Ng P."/>
            <person name="Nilsson R."/>
            <person name="Nishiguchi S."/>
            <person name="Nishikawa S."/>
            <person name="Nori F."/>
            <person name="Ohara O."/>
            <person name="Okazaki Y."/>
            <person name="Orlando V."/>
            <person name="Pang K.C."/>
            <person name="Pavan W.J."/>
            <person name="Pavesi G."/>
            <person name="Pesole G."/>
            <person name="Petrovsky N."/>
            <person name="Piazza S."/>
            <person name="Reed J."/>
            <person name="Reid J.F."/>
            <person name="Ring B.Z."/>
            <person name="Ringwald M."/>
            <person name="Rost B."/>
            <person name="Ruan Y."/>
            <person name="Salzberg S.L."/>
            <person name="Sandelin A."/>
            <person name="Schneider C."/>
            <person name="Schoenbach C."/>
            <person name="Sekiguchi K."/>
            <person name="Semple C.A."/>
            <person name="Seno S."/>
            <person name="Sessa L."/>
            <person name="Sheng Y."/>
            <person name="Shibata Y."/>
            <person name="Shimada H."/>
            <person name="Shimada K."/>
            <person name="Silva D."/>
            <person name="Sinclair B."/>
            <person name="Sperling S."/>
            <person name="Stupka E."/>
            <person name="Sugiura K."/>
            <person name="Sultana R."/>
            <person name="Takenaka Y."/>
            <person name="Taki K."/>
            <person name="Tammoja K."/>
            <person name="Tan S.L."/>
            <person name="Tang S."/>
            <person name="Taylor M.S."/>
            <person name="Tegner J."/>
            <person name="Teichmann S.A."/>
            <person name="Ueda H.R."/>
            <person name="van Nimwegen E."/>
            <person name="Verardo R."/>
            <person name="Wei C.L."/>
            <person name="Yagi K."/>
            <person name="Yamanishi H."/>
            <person name="Zabarovsky E."/>
            <person name="Zhu S."/>
            <person name="Zimmer A."/>
            <person name="Hide W."/>
            <person name="Bult C."/>
            <person name="Grimmond S.M."/>
            <person name="Teasdale R.D."/>
            <person name="Liu E.T."/>
            <person name="Brusic V."/>
            <person name="Quackenbush J."/>
            <person name="Wahlestedt C."/>
            <person name="Mattick J.S."/>
            <person name="Hume D.A."/>
            <person name="Kai C."/>
            <person name="Sasaki D."/>
            <person name="Tomaru Y."/>
            <person name="Fukuda S."/>
            <person name="Kanamori-Katayama M."/>
            <person name="Suzuki M."/>
            <person name="Aoki J."/>
            <person name="Arakawa T."/>
            <person name="Iida J."/>
            <person name="Imamura K."/>
            <person name="Itoh M."/>
            <person name="Kato T."/>
            <person name="Kawaji H."/>
            <person name="Kawagashira N."/>
            <person name="Kawashima T."/>
            <person name="Kojima M."/>
            <person name="Kondo S."/>
            <person name="Konno H."/>
            <person name="Nakano K."/>
            <person name="Ninomiya N."/>
            <person name="Nishio T."/>
            <person name="Okada M."/>
            <person name="Plessy C."/>
            <person name="Shibata K."/>
            <person name="Shiraki T."/>
            <person name="Suzuki S."/>
            <person name="Tagami M."/>
            <person name="Waki K."/>
            <person name="Watahiki A."/>
            <person name="Okamura-Oho Y."/>
            <person name="Suzuki H."/>
            <person name="Kawai J."/>
            <person name="Hayashizaki Y."/>
        </authorList>
    </citation>
    <scope>NUCLEOTIDE SEQUENCE [LARGE SCALE MRNA] OF 1-469 AND 745-1365</scope>
    <source>
        <strain>C57BL/6J</strain>
        <tissue>Embryo</tissue>
        <tissue>Thymus</tissue>
    </source>
</reference>
<reference key="3">
    <citation type="journal article" date="2010" name="Cell">
        <title>A tissue-specific atlas of mouse protein phosphorylation and expression.</title>
        <authorList>
            <person name="Huttlin E.L."/>
            <person name="Jedrychowski M.P."/>
            <person name="Elias J.E."/>
            <person name="Goswami T."/>
            <person name="Rad R."/>
            <person name="Beausoleil S.A."/>
            <person name="Villen J."/>
            <person name="Haas W."/>
            <person name="Sowa M.E."/>
            <person name="Gygi S.P."/>
        </authorList>
    </citation>
    <scope>PHOSPHORYLATION [LARGE SCALE ANALYSIS] AT SER-198</scope>
    <scope>IDENTIFICATION BY MASS SPECTROMETRY [LARGE SCALE ANALYSIS]</scope>
    <source>
        <tissue>Brown adipose tissue</tissue>
        <tissue>Heart</tissue>
        <tissue>Kidney</tissue>
        <tissue>Liver</tissue>
        <tissue>Lung</tissue>
        <tissue>Pancreas</tissue>
        <tissue>Spleen</tissue>
        <tissue>Testis</tissue>
    </source>
</reference>
<gene>
    <name evidence="2" type="primary">Dhx29</name>
</gene>
<evidence type="ECO:0000250" key="1">
    <source>
        <dbReference type="UniProtKB" id="Q7Z478"/>
    </source>
</evidence>
<evidence type="ECO:0000255" key="2">
    <source>
        <dbReference type="HAMAP-Rule" id="MF_03068"/>
    </source>
</evidence>
<evidence type="ECO:0000256" key="3">
    <source>
        <dbReference type="SAM" id="MobiDB-lite"/>
    </source>
</evidence>
<evidence type="ECO:0007744" key="4">
    <source>
    </source>
</evidence>
<keyword id="KW-0067">ATP-binding</keyword>
<keyword id="KW-0175">Coiled coil</keyword>
<keyword id="KW-0963">Cytoplasm</keyword>
<keyword id="KW-0347">Helicase</keyword>
<keyword id="KW-0378">Hydrolase</keyword>
<keyword id="KW-0396">Initiation factor</keyword>
<keyword id="KW-0547">Nucleotide-binding</keyword>
<keyword id="KW-0597">Phosphoprotein</keyword>
<keyword id="KW-0648">Protein biosynthesis</keyword>
<keyword id="KW-1185">Reference proteome</keyword>
<name>DHX29_MOUSE</name>
<accession>Q6PGC1</accession>
<accession>Q8BQJ4</accession>
<accession>Q8BT01</accession>
<accession>Q8C9B7</accession>
<accession>Q8C9H9</accession>
<proteinExistence type="evidence at protein level"/>
<comment type="function">
    <text evidence="2">ATP-binding RNA helicase involved in translation initiation. Part of the 43S pre-initiation complex that is required for efficient initiation on mRNAs of higher eukaryotes with structured 5'-UTRs by promoting efficient NTPase-dependent 48S complex formation. Specifically binds to the 40S ribosome near the mRNA entrance. Does not possess a processive helicase activity.</text>
</comment>
<comment type="catalytic activity">
    <reaction evidence="2">
        <text>ATP + H2O = ADP + phosphate + H(+)</text>
        <dbReference type="Rhea" id="RHEA:13065"/>
        <dbReference type="ChEBI" id="CHEBI:15377"/>
        <dbReference type="ChEBI" id="CHEBI:15378"/>
        <dbReference type="ChEBI" id="CHEBI:30616"/>
        <dbReference type="ChEBI" id="CHEBI:43474"/>
        <dbReference type="ChEBI" id="CHEBI:456216"/>
        <dbReference type="EC" id="3.6.4.13"/>
    </reaction>
</comment>
<comment type="subunit">
    <text evidence="2">Part of the 43S pre-initiation complex (PIC) that contains at least Met-tRNA, EIF1, EIF1A (EIF1AX or EIF1AY), EIF2S1, EIF2S2, EIF2S3, EIF3A, EIF3B, EIF3C, EIF3D, EIF3E, EIF3F, EIF3G, EIF3H, EIF3I, EIF3J, EIF3K, EIF3L, EIF3M, DHX29 and the 40S ribosomal subunit.</text>
</comment>
<comment type="subcellular location">
    <subcellularLocation>
        <location evidence="2">Cytoplasm</location>
    </subcellularLocation>
</comment>
<comment type="similarity">
    <text evidence="2">Belongs to the DEAD box helicase family. DEAH subfamily.</text>
</comment>
<protein>
    <recommendedName>
        <fullName evidence="2">ATP-dependent RNA helicase DHX29</fullName>
        <ecNumber evidence="2">3.6.4.13</ecNumber>
    </recommendedName>
    <alternativeName>
        <fullName evidence="2">DEAH box protein 29</fullName>
    </alternativeName>
</protein>
<organism>
    <name type="scientific">Mus musculus</name>
    <name type="common">Mouse</name>
    <dbReference type="NCBI Taxonomy" id="10090"/>
    <lineage>
        <taxon>Eukaryota</taxon>
        <taxon>Metazoa</taxon>
        <taxon>Chordata</taxon>
        <taxon>Craniata</taxon>
        <taxon>Vertebrata</taxon>
        <taxon>Euteleostomi</taxon>
        <taxon>Mammalia</taxon>
        <taxon>Eutheria</taxon>
        <taxon>Euarchontoglires</taxon>
        <taxon>Glires</taxon>
        <taxon>Rodentia</taxon>
        <taxon>Myomorpha</taxon>
        <taxon>Muroidea</taxon>
        <taxon>Muridae</taxon>
        <taxon>Murinae</taxon>
        <taxon>Mus</taxon>
        <taxon>Mus</taxon>
    </lineage>
</organism>